<proteinExistence type="inferred from homology"/>
<feature type="signal peptide" evidence="1">
    <location>
        <begin position="1"/>
        <end position="27"/>
    </location>
</feature>
<feature type="propeptide" id="PRO_0000028505" evidence="1">
    <location>
        <begin position="28"/>
        <end position="145"/>
    </location>
</feature>
<feature type="chain" id="PRO_0000028506" description="Streptopain">
    <location>
        <begin position="146"/>
        <end position="398"/>
    </location>
</feature>
<feature type="region of interest" description="C-terminal active site loop" evidence="1">
    <location>
        <begin position="368"/>
        <end position="390"/>
    </location>
</feature>
<feature type="active site" description="Nucleophile" evidence="1">
    <location>
        <position position="192"/>
    </location>
</feature>
<feature type="active site" description="Proton acceptor" evidence="1">
    <location>
        <position position="340"/>
    </location>
</feature>
<feature type="binding site" evidence="1">
    <location>
        <position position="282"/>
    </location>
    <ligand>
        <name>a protein</name>
        <dbReference type="ChEBI" id="CHEBI:16541"/>
    </ligand>
</feature>
<feature type="binding site" evidence="1">
    <location>
        <position position="339"/>
    </location>
    <ligand>
        <name>a protein</name>
        <dbReference type="ChEBI" id="CHEBI:16541"/>
    </ligand>
</feature>
<feature type="modified residue" description="Cysteine methyl disulfide; in zymogen form" evidence="1">
    <location>
        <position position="192"/>
    </location>
</feature>
<gene>
    <name type="primary">speB</name>
    <name type="ordered locus">SpyM3_1742</name>
</gene>
<evidence type="ECO:0000250" key="1">
    <source>
        <dbReference type="UniProtKB" id="P0C0J0"/>
    </source>
</evidence>
<evidence type="ECO:0000250" key="2">
    <source>
        <dbReference type="UniProtKB" id="P0C0J1"/>
    </source>
</evidence>
<evidence type="ECO:0000269" key="3">
    <source>
    </source>
</evidence>
<evidence type="ECO:0000269" key="4">
    <source>
    </source>
</evidence>
<evidence type="ECO:0000305" key="5"/>
<name>SPEB_STRP3</name>
<organism>
    <name type="scientific">Streptococcus pyogenes serotype M3 (strain ATCC BAA-595 / MGAS315)</name>
    <dbReference type="NCBI Taxonomy" id="198466"/>
    <lineage>
        <taxon>Bacteria</taxon>
        <taxon>Bacillati</taxon>
        <taxon>Bacillota</taxon>
        <taxon>Bacilli</taxon>
        <taxon>Lactobacillales</taxon>
        <taxon>Streptococcaceae</taxon>
        <taxon>Streptococcus</taxon>
    </lineage>
</organism>
<comment type="function">
    <text evidence="2 3">Cysteine protease that acts as a key streptococcal virulence factor by cleaving host proteins involved in immune response (PubMed:7516997). Triggers inflammation by mediating cleavage of host proteins, which can both promote host pathogenesis by triggering sterile inflammation and/or restrict streptococcal infection, depending on host immune statue and infection site (By similarity). Cleaves host gasdermin-A (GSDMA) in epithelial cells, promoting GSDMA activation and formation of gasdermin pores, triggering pyroptosis (By similarity). Pyroptosis triggers the elimination of the infected skin cell, depriving the pathogen of its protective niche, while inducing an inflammatory response (By similarity). This ultimately prevents bacterial penetration of the epithelial barrier and a subsequent systemic dissemination of the pathogen (By similarity). Also mediates cleavage of the cytokine precursor interleukin-1 beta (IL1B) to its mature form, resulting in inflammation and septic shock (By similarity). SpeB-mediated maturation of IL1B plays a dual role depending on infection site: while IL1B inflammatory response prevents bacterial growth during invasive skin infections, it promotes streptococcal infection of the nasopharynx by disrupting colonization resistance mediated by the microbiota (By similarity). Inhibits host autophagy be catalyzing cleavage and inactivation of key autophagy factors, such as CALCOCO2, NBR1 and SQSTM1 (By similarity). Cleaves and inhibits a number of complement factors, such as C2, C3-beta chain of C3, C4, C5 or SERPING1, thereby promoting evasion of host immunity (By similarity). May also impair adaptive immunity by catalyzing cleavage and degradation of host immunoglobulins to promote immune system evasion; the relevance of this activity is however unsure in vivo (By similarity). Catalyzes maturation and release of the peptide hormone bradykinin from the precursor Kininogen-1 (KNG1) to produce hypotension during septic shock (By similarity). Also involved in bacterial translocation across the host epithelial barrier by mediating cleavage and degradation of host epithelial junction proteins, such as CDH1 and OCLN (By similarity). Additionally, has been involved in degradation of fibronectin and vitronectin, two host extracellular matrix proteins involved in tissue integrity (PubMed:7516997). Also able to catalyze cleavage and degradation of streptococcal proteins, such as C5a peptidase, EndoS or SmeZ (By similarity). Degradation of streptococcal proteins is however strictly regulated to preserve integrity of other virulence factors (By similarity).</text>
</comment>
<comment type="catalytic activity">
    <reaction evidence="2">
        <text>Preferential cleavage with hydrophobic residues at P2, P1 and P1'.</text>
        <dbReference type="EC" id="3.4.22.10"/>
    </reaction>
</comment>
<comment type="activity regulation">
    <text evidence="1 2">Synthesized as an inactive zymogen to protect the intracellular components of the bacteria from proteolytic activity during protein production (By similarity). Once secreted into the extracellular milieu, cleaved into the active protease: maturation can be mediated in cis by autocatalytic cleavage, or in trans by mature SpeB or host proteases. Protease activity is strongly inhibited by zinc and copper, which prevent its maturation into an active protease: inhibition by metal ions may be required to prevent proteolysis of streptococcal proteins (By similarity).</text>
</comment>
<comment type="subunit">
    <text evidence="1">Monomer.</text>
</comment>
<comment type="subcellular location">
    <subcellularLocation>
        <location evidence="3">Secreted</location>
    </subcellularLocation>
    <subcellularLocation>
        <location evidence="3">Host extracellular space</location>
    </subcellularLocation>
    <subcellularLocation>
        <location evidence="1">Host cytoplasm</location>
    </subcellularLocation>
</comment>
<comment type="domain">
    <text evidence="1">The C-terminal active site loop is required for the recognition and recruitment of substrates and release of hydrolyzed products.</text>
</comment>
<comment type="PTM">
    <text evidence="2">The mature protease is derived from the precursor sequence by cleavage, either in cis via an autocatalytic mechanism, or in trans by mature SpeB or host proteases (trypsin, plasmin or subtilisin). Maturation can involve a number of protein cleavage intermediates. Mature SpeB probably plays the most important role in protein maturation in physiological conditions.</text>
</comment>
<comment type="PTM">
    <text evidence="1">Methylthiolation at Cys-192 of the inactive zymogen form is probably involved in the mechanism of secretion of the proteinase into the culture fluid.</text>
</comment>
<comment type="disruption phenotype">
    <text evidence="4">Cells lacking SpeB display a strongly decreased virulence.</text>
</comment>
<comment type="similarity">
    <text evidence="5">Belongs to the peptidase C10 family.</text>
</comment>
<sequence length="398" mass="43174">MNKKKLGIRLLSLLALGGFVLANPVFADQNFARNEKEAKDSAITFIQKSAAIKAGARSAEDIKLDKVNLGGELSGSNMYVYNISTGGFVIVSGDKRSPEILGYSTSGSFDANGKENIASFMESYVEQIKENKKLDTTYAGTAEIKQPVVKSLLDSKGIHYNQGNPYNLLTPVIEKVKPGEQSFVGQHAATGCVATATAQIMKYHNYPNKGLKDYTYTLSSNNPYFNHPKNLFAAISTRQYNWNNILPTYSGRESNVQKMAISELMADVGISVDMDYGPSSGSAGSSRVQRALKENFGYNQSVHQINRSDFSKQDWEAQIDKELSQNQPVYYQGVGKVGGHAFVIDGADGRNFYHVNWGWGGVSDGFFRLDALNPSALGTGGGAGGFNGYQSAVVGIKP</sequence>
<accession>P0DD38</accession>
<accession>P00788</accession>
<accession>P26296</accession>
<accession>P68884</accession>
<accession>Q54960</accession>
<accession>Q54961</accession>
<accession>Q54962</accession>
<accession>Q54963</accession>
<accession>Q54964</accession>
<accession>Q54965</accession>
<accession>Q54966</accession>
<accession>Q54967</accession>
<accession>Q54968</accession>
<accession>Q57024</accession>
<accession>Q57082</accession>
<accession>Q57202</accession>
<accession>Q57211</accession>
<accession>Q57212</accession>
<accession>Q9S680</accession>
<reference key="1">
    <citation type="journal article" date="1993" name="Microb. Pathog.">
        <title>A conserved Streptococcus pyogenes extracellular cysteine protease cleaves human fibronectin and degrades vitronectin.</title>
        <authorList>
            <person name="Kapur V."/>
            <person name="Topouzis S."/>
            <person name="Majesky M.W."/>
            <person name="Li L.L."/>
            <person name="Hamrick M.R."/>
            <person name="Hamill R.J."/>
            <person name="Patti J.M."/>
            <person name="Musser J.M."/>
        </authorList>
    </citation>
    <scope>NUCLEOTIDE SEQUENCE [GENOMIC DNA]</scope>
    <scope>FUNCTION</scope>
    <scope>SUBCELLULAR LOCATION</scope>
    <source>
        <strain>ATCC BAA-595 / MGAS315</strain>
    </source>
</reference>
<reference key="2">
    <citation type="journal article" date="2002" name="Proc. Natl. Acad. Sci. U.S.A.">
        <title>Genome sequence of a serotype M3 strain of group A Streptococcus: phage-encoded toxins, the high-virulence phenotype, and clone emergence.</title>
        <authorList>
            <person name="Beres S.B."/>
            <person name="Sylva G.L."/>
            <person name="Barbian K.D."/>
            <person name="Lei B."/>
            <person name="Hoff J.S."/>
            <person name="Mammarella N.D."/>
            <person name="Liu M.-Y."/>
            <person name="Smoot J.C."/>
            <person name="Porcella S.F."/>
            <person name="Parkins L.D."/>
            <person name="Campbell D.S."/>
            <person name="Smith T.M."/>
            <person name="McCormick J.K."/>
            <person name="Leung D.Y.M."/>
            <person name="Schlievert P.M."/>
            <person name="Musser J.M."/>
        </authorList>
    </citation>
    <scope>NUCLEOTIDE SEQUENCE [LARGE SCALE GENOMIC DNA]</scope>
    <source>
        <strain>ATCC BAA-595 / MGAS315</strain>
    </source>
</reference>
<reference key="3">
    <citation type="journal article" date="1997" name="J. Clin. Invest.">
        <title>Inactivation of Streptococcus pyogenes extracellular cysteine protease significantly decreases mouse lethality of serotype M3 and M49 strains.</title>
        <authorList>
            <person name="Lukomski S."/>
            <person name="Sreevatsan S."/>
            <person name="Amberg C."/>
            <person name="Reichardt W."/>
            <person name="Woischnik M."/>
            <person name="Podbielski A."/>
            <person name="Musser J.M."/>
        </authorList>
    </citation>
    <scope>FUNCTION</scope>
    <scope>DISRUPTION PHENOTYPE</scope>
    <source>
        <strain>ATCC BAA-595 / MGAS315</strain>
    </source>
</reference>
<protein>
    <recommendedName>
        <fullName>Streptopain</fullName>
        <ecNumber>3.4.22.10</ecNumber>
    </recommendedName>
    <alternativeName>
        <fullName>Exotoxin type B</fullName>
    </alternativeName>
    <alternativeName>
        <fullName>SPE B</fullName>
    </alternativeName>
    <alternativeName>
        <fullName>Streptococcal cysteine proteinase</fullName>
    </alternativeName>
    <alternativeName>
        <fullName>Streptococcus peptidase A</fullName>
        <shortName>SPP</shortName>
    </alternativeName>
</protein>
<keyword id="KW-0068">Autocatalytic cleavage</keyword>
<keyword id="KW-1035">Host cytoplasm</keyword>
<keyword id="KW-0378">Hydrolase</keyword>
<keyword id="KW-0488">Methylation</keyword>
<keyword id="KW-0645">Protease</keyword>
<keyword id="KW-0964">Secreted</keyword>
<keyword id="KW-0732">Signal</keyword>
<keyword id="KW-0788">Thiol protease</keyword>
<keyword id="KW-0800">Toxin</keyword>
<keyword id="KW-0843">Virulence</keyword>
<keyword id="KW-0865">Zymogen</keyword>
<dbReference type="EC" id="3.4.22.10"/>
<dbReference type="EMBL" id="L26146">
    <property type="protein sequence ID" value="AAA27012.1"/>
    <property type="molecule type" value="Genomic_DNA"/>
</dbReference>
<dbReference type="EMBL" id="AE014074">
    <property type="protein sequence ID" value="AAM80349.1"/>
    <property type="molecule type" value="Genomic_DNA"/>
</dbReference>
<dbReference type="RefSeq" id="WP_002991253.1">
    <property type="nucleotide sequence ID" value="NC_004070.1"/>
</dbReference>
<dbReference type="BMRB" id="P0DD38"/>
<dbReference type="SMR" id="P0DD38"/>
<dbReference type="MEROPS" id="C10.001"/>
<dbReference type="KEGG" id="spg:SpyM3_1742"/>
<dbReference type="HOGENOM" id="CLU_716727_0_0_9"/>
<dbReference type="Proteomes" id="UP000000564">
    <property type="component" value="Chromosome"/>
</dbReference>
<dbReference type="GO" id="GO:0005576">
    <property type="term" value="C:extracellular region"/>
    <property type="evidence" value="ECO:0007669"/>
    <property type="project" value="UniProtKB-SubCell"/>
</dbReference>
<dbReference type="GO" id="GO:0044164">
    <property type="term" value="C:host cell cytosol"/>
    <property type="evidence" value="ECO:0000250"/>
    <property type="project" value="UniProtKB"/>
</dbReference>
<dbReference type="GO" id="GO:0043655">
    <property type="term" value="C:host extracellular space"/>
    <property type="evidence" value="ECO:0000250"/>
    <property type="project" value="UniProtKB"/>
</dbReference>
<dbReference type="GO" id="GO:0004197">
    <property type="term" value="F:cysteine-type endopeptidase activity"/>
    <property type="evidence" value="ECO:0000250"/>
    <property type="project" value="UniProtKB"/>
</dbReference>
<dbReference type="GO" id="GO:0090729">
    <property type="term" value="F:toxin activity"/>
    <property type="evidence" value="ECO:0000315"/>
    <property type="project" value="UniProtKB"/>
</dbReference>
<dbReference type="GO" id="GO:0006508">
    <property type="term" value="P:proteolysis"/>
    <property type="evidence" value="ECO:0007669"/>
    <property type="project" value="UniProtKB-KW"/>
</dbReference>
<dbReference type="GO" id="GO:0034050">
    <property type="term" value="P:symbiont-induced defense-related programmed cell death"/>
    <property type="evidence" value="ECO:0000250"/>
    <property type="project" value="UniProtKB"/>
</dbReference>
<dbReference type="GO" id="GO:0042783">
    <property type="term" value="P:symbiont-mediated evasion of host immune response"/>
    <property type="evidence" value="ECO:0000250"/>
    <property type="project" value="UniProtKB"/>
</dbReference>
<dbReference type="GO" id="GO:0140321">
    <property type="term" value="P:symbiont-mediated suppression of host autophagy"/>
    <property type="evidence" value="ECO:0000250"/>
    <property type="project" value="UniProtKB"/>
</dbReference>
<dbReference type="Gene3D" id="3.90.70.50">
    <property type="entry name" value="Peptidase C10, streptopain"/>
    <property type="match status" value="1"/>
</dbReference>
<dbReference type="InterPro" id="IPR038765">
    <property type="entry name" value="Papain-like_cys_pep_sf"/>
</dbReference>
<dbReference type="InterPro" id="IPR000200">
    <property type="entry name" value="Peptidase_C10"/>
</dbReference>
<dbReference type="InterPro" id="IPR025896">
    <property type="entry name" value="Spi_Prtas-inh"/>
</dbReference>
<dbReference type="InterPro" id="IPR044934">
    <property type="entry name" value="Streptopain_sf"/>
</dbReference>
<dbReference type="Pfam" id="PF13734">
    <property type="entry name" value="Inhibitor_I69"/>
    <property type="match status" value="1"/>
</dbReference>
<dbReference type="Pfam" id="PF01640">
    <property type="entry name" value="Peptidase_C10"/>
    <property type="match status" value="1"/>
</dbReference>
<dbReference type="PRINTS" id="PR00797">
    <property type="entry name" value="STREPTOPAIN"/>
</dbReference>
<dbReference type="SUPFAM" id="SSF54001">
    <property type="entry name" value="Cysteine proteinases"/>
    <property type="match status" value="1"/>
</dbReference>